<feature type="chain" id="PRO_0000130181" description="Small ribosomal subunit protein uS3">
    <location>
        <begin position="1"/>
        <end position="264"/>
    </location>
</feature>
<feature type="domain" description="KH type-2" evidence="1">
    <location>
        <begin position="39"/>
        <end position="107"/>
    </location>
</feature>
<feature type="region of interest" description="Disordered" evidence="2">
    <location>
        <begin position="211"/>
        <end position="264"/>
    </location>
</feature>
<feature type="compositionally biased region" description="Basic and acidic residues" evidence="2">
    <location>
        <begin position="221"/>
        <end position="239"/>
    </location>
</feature>
<feature type="compositionally biased region" description="Gly residues" evidence="2">
    <location>
        <begin position="240"/>
        <end position="255"/>
    </location>
</feature>
<reference key="1">
    <citation type="journal article" date="2002" name="Nature">
        <title>Genome sequence of the plant pathogen Ralstonia solanacearum.</title>
        <authorList>
            <person name="Salanoubat M."/>
            <person name="Genin S."/>
            <person name="Artiguenave F."/>
            <person name="Gouzy J."/>
            <person name="Mangenot S."/>
            <person name="Arlat M."/>
            <person name="Billault A."/>
            <person name="Brottier P."/>
            <person name="Camus J.-C."/>
            <person name="Cattolico L."/>
            <person name="Chandler M."/>
            <person name="Choisne N."/>
            <person name="Claudel-Renard C."/>
            <person name="Cunnac S."/>
            <person name="Demange N."/>
            <person name="Gaspin C."/>
            <person name="Lavie M."/>
            <person name="Moisan A."/>
            <person name="Robert C."/>
            <person name="Saurin W."/>
            <person name="Schiex T."/>
            <person name="Siguier P."/>
            <person name="Thebault P."/>
            <person name="Whalen M."/>
            <person name="Wincker P."/>
            <person name="Levy M."/>
            <person name="Weissenbach J."/>
            <person name="Boucher C.A."/>
        </authorList>
    </citation>
    <scope>NUCLEOTIDE SEQUENCE [LARGE SCALE GENOMIC DNA]</scope>
    <source>
        <strain>ATCC BAA-1114 / GMI1000</strain>
    </source>
</reference>
<proteinExistence type="inferred from homology"/>
<gene>
    <name evidence="1" type="primary">rpsC</name>
    <name type="ordered locus">RSc3013</name>
    <name type="ORF">RS01076</name>
</gene>
<accession>Q8XV18</accession>
<keyword id="KW-1185">Reference proteome</keyword>
<keyword id="KW-0687">Ribonucleoprotein</keyword>
<keyword id="KW-0689">Ribosomal protein</keyword>
<keyword id="KW-0694">RNA-binding</keyword>
<keyword id="KW-0699">rRNA-binding</keyword>
<name>RS3_RALN1</name>
<sequence length="264" mass="29738">MGQKIHPTGFRLAVSRNWASRWYASNTQFAGMLKEDIEVREFLKKKLKNASVGRVVIERPAKNARITIYSSRPGVVIGKKGEDIELLKAELQRRMGVPVHVNIEEIRKPEVDAQLIADSITQQLERRIMFRRAMKRAMQNAMRLGAQGIKIMSSGRLNGIEIARTEWYREGRVPLHTLRADIDYGFSEAETTYGIIGVKVWVYKGDHLGRNDAPVVEEPQEERRKRPGRPEGRRREGEGRPGGQRRGAGAGGRRSGGADAKTGE</sequence>
<dbReference type="EMBL" id="AL646052">
    <property type="protein sequence ID" value="CAD16722.1"/>
    <property type="molecule type" value="Genomic_DNA"/>
</dbReference>
<dbReference type="RefSeq" id="WP_011002912.1">
    <property type="nucleotide sequence ID" value="NC_003295.1"/>
</dbReference>
<dbReference type="SMR" id="Q8XV18"/>
<dbReference type="STRING" id="267608.RSc3013"/>
<dbReference type="EnsemblBacteria" id="CAD16722">
    <property type="protein sequence ID" value="CAD16722"/>
    <property type="gene ID" value="RSc3013"/>
</dbReference>
<dbReference type="KEGG" id="rso:RSc3013"/>
<dbReference type="eggNOG" id="COG0092">
    <property type="taxonomic scope" value="Bacteria"/>
</dbReference>
<dbReference type="HOGENOM" id="CLU_058591_0_2_4"/>
<dbReference type="Proteomes" id="UP000001436">
    <property type="component" value="Chromosome"/>
</dbReference>
<dbReference type="GO" id="GO:0022627">
    <property type="term" value="C:cytosolic small ribosomal subunit"/>
    <property type="evidence" value="ECO:0007669"/>
    <property type="project" value="TreeGrafter"/>
</dbReference>
<dbReference type="GO" id="GO:0003729">
    <property type="term" value="F:mRNA binding"/>
    <property type="evidence" value="ECO:0007669"/>
    <property type="project" value="UniProtKB-UniRule"/>
</dbReference>
<dbReference type="GO" id="GO:0019843">
    <property type="term" value="F:rRNA binding"/>
    <property type="evidence" value="ECO:0007669"/>
    <property type="project" value="UniProtKB-UniRule"/>
</dbReference>
<dbReference type="GO" id="GO:0003735">
    <property type="term" value="F:structural constituent of ribosome"/>
    <property type="evidence" value="ECO:0007669"/>
    <property type="project" value="InterPro"/>
</dbReference>
<dbReference type="GO" id="GO:0006412">
    <property type="term" value="P:translation"/>
    <property type="evidence" value="ECO:0007669"/>
    <property type="project" value="UniProtKB-UniRule"/>
</dbReference>
<dbReference type="CDD" id="cd02412">
    <property type="entry name" value="KH-II_30S_S3"/>
    <property type="match status" value="1"/>
</dbReference>
<dbReference type="FunFam" id="3.30.1140.32:FF:000006">
    <property type="entry name" value="30S ribosomal protein S3"/>
    <property type="match status" value="1"/>
</dbReference>
<dbReference type="FunFam" id="3.30.300.20:FF:000001">
    <property type="entry name" value="30S ribosomal protein S3"/>
    <property type="match status" value="1"/>
</dbReference>
<dbReference type="Gene3D" id="3.30.300.20">
    <property type="match status" value="1"/>
</dbReference>
<dbReference type="Gene3D" id="3.30.1140.32">
    <property type="entry name" value="Ribosomal protein S3, C-terminal domain"/>
    <property type="match status" value="1"/>
</dbReference>
<dbReference type="HAMAP" id="MF_01309_B">
    <property type="entry name" value="Ribosomal_uS3_B"/>
    <property type="match status" value="1"/>
</dbReference>
<dbReference type="InterPro" id="IPR004087">
    <property type="entry name" value="KH_dom"/>
</dbReference>
<dbReference type="InterPro" id="IPR015946">
    <property type="entry name" value="KH_dom-like_a/b"/>
</dbReference>
<dbReference type="InterPro" id="IPR004044">
    <property type="entry name" value="KH_dom_type_2"/>
</dbReference>
<dbReference type="InterPro" id="IPR009019">
    <property type="entry name" value="KH_sf_prok-type"/>
</dbReference>
<dbReference type="InterPro" id="IPR036419">
    <property type="entry name" value="Ribosomal_S3_C_sf"/>
</dbReference>
<dbReference type="InterPro" id="IPR005704">
    <property type="entry name" value="Ribosomal_uS3_bac-typ"/>
</dbReference>
<dbReference type="InterPro" id="IPR001351">
    <property type="entry name" value="Ribosomal_uS3_C"/>
</dbReference>
<dbReference type="InterPro" id="IPR018280">
    <property type="entry name" value="Ribosomal_uS3_CS"/>
</dbReference>
<dbReference type="NCBIfam" id="TIGR01009">
    <property type="entry name" value="rpsC_bact"/>
    <property type="match status" value="1"/>
</dbReference>
<dbReference type="PANTHER" id="PTHR11760">
    <property type="entry name" value="30S/40S RIBOSOMAL PROTEIN S3"/>
    <property type="match status" value="1"/>
</dbReference>
<dbReference type="PANTHER" id="PTHR11760:SF19">
    <property type="entry name" value="SMALL RIBOSOMAL SUBUNIT PROTEIN US3C"/>
    <property type="match status" value="1"/>
</dbReference>
<dbReference type="Pfam" id="PF07650">
    <property type="entry name" value="KH_2"/>
    <property type="match status" value="1"/>
</dbReference>
<dbReference type="Pfam" id="PF00189">
    <property type="entry name" value="Ribosomal_S3_C"/>
    <property type="match status" value="1"/>
</dbReference>
<dbReference type="SMART" id="SM00322">
    <property type="entry name" value="KH"/>
    <property type="match status" value="1"/>
</dbReference>
<dbReference type="SUPFAM" id="SSF54814">
    <property type="entry name" value="Prokaryotic type KH domain (KH-domain type II)"/>
    <property type="match status" value="1"/>
</dbReference>
<dbReference type="SUPFAM" id="SSF54821">
    <property type="entry name" value="Ribosomal protein S3 C-terminal domain"/>
    <property type="match status" value="1"/>
</dbReference>
<dbReference type="PROSITE" id="PS50823">
    <property type="entry name" value="KH_TYPE_2"/>
    <property type="match status" value="1"/>
</dbReference>
<dbReference type="PROSITE" id="PS00548">
    <property type="entry name" value="RIBOSOMAL_S3"/>
    <property type="match status" value="1"/>
</dbReference>
<evidence type="ECO:0000255" key="1">
    <source>
        <dbReference type="HAMAP-Rule" id="MF_01309"/>
    </source>
</evidence>
<evidence type="ECO:0000256" key="2">
    <source>
        <dbReference type="SAM" id="MobiDB-lite"/>
    </source>
</evidence>
<evidence type="ECO:0000305" key="3"/>
<organism>
    <name type="scientific">Ralstonia nicotianae (strain ATCC BAA-1114 / GMI1000)</name>
    <name type="common">Ralstonia solanacearum</name>
    <dbReference type="NCBI Taxonomy" id="267608"/>
    <lineage>
        <taxon>Bacteria</taxon>
        <taxon>Pseudomonadati</taxon>
        <taxon>Pseudomonadota</taxon>
        <taxon>Betaproteobacteria</taxon>
        <taxon>Burkholderiales</taxon>
        <taxon>Burkholderiaceae</taxon>
        <taxon>Ralstonia</taxon>
        <taxon>Ralstonia solanacearum species complex</taxon>
    </lineage>
</organism>
<protein>
    <recommendedName>
        <fullName evidence="1">Small ribosomal subunit protein uS3</fullName>
    </recommendedName>
    <alternativeName>
        <fullName evidence="3">30S ribosomal protein S3</fullName>
    </alternativeName>
</protein>
<comment type="function">
    <text evidence="1">Binds the lower part of the 30S subunit head. Binds mRNA in the 70S ribosome, positioning it for translation.</text>
</comment>
<comment type="subunit">
    <text evidence="1">Part of the 30S ribosomal subunit. Forms a tight complex with proteins S10 and S14.</text>
</comment>
<comment type="similarity">
    <text evidence="1">Belongs to the universal ribosomal protein uS3 family.</text>
</comment>